<sequence>MLMNSVIALTFLTASSNNGGLNIDVQQEEEKRINNDLNQYDTTLFNKDSKEVNDAIAKQKKERQQQIKNDMFQNQASHSTRLNETKKVLFSKSNLEKTSESDKSPYIQNKQEKKIFPYILMSVGAFLTLGFVIFSIHKGRRTKNESARKSNI</sequence>
<comment type="function">
    <text evidence="1">Component of the ESAT-6 secretion system (Ess). Required for the secretion of EsxA and EsxB.</text>
</comment>
<comment type="subcellular location">
    <subcellularLocation>
        <location evidence="1">Cell membrane</location>
        <topology evidence="2">Single-pass type I membrane protein</topology>
    </subcellularLocation>
</comment>
<comment type="similarity">
    <text evidence="3">Belongs to the EssA family.</text>
</comment>
<protein>
    <recommendedName>
        <fullName evidence="1">ESAT-6 secretion machinery protein EssA</fullName>
    </recommendedName>
</protein>
<gene>
    <name evidence="1" type="primary">essA</name>
    <name type="ordered locus">SA0273</name>
</gene>
<dbReference type="EMBL" id="BA000018">
    <property type="protein sequence ID" value="BAB41497.1"/>
    <property type="molecule type" value="Genomic_DNA"/>
</dbReference>
<dbReference type="PIR" id="F89792">
    <property type="entry name" value="F89792"/>
</dbReference>
<dbReference type="RefSeq" id="WP_000928938.1">
    <property type="nucleotide sequence ID" value="NC_002745.2"/>
</dbReference>
<dbReference type="EnsemblBacteria" id="BAB41497">
    <property type="protein sequence ID" value="BAB41497"/>
    <property type="gene ID" value="BAB41497"/>
</dbReference>
<dbReference type="KEGG" id="sau:SA0273"/>
<dbReference type="HOGENOM" id="CLU_144832_0_0_9"/>
<dbReference type="GO" id="GO:0005886">
    <property type="term" value="C:plasma membrane"/>
    <property type="evidence" value="ECO:0007669"/>
    <property type="project" value="UniProtKB-SubCell"/>
</dbReference>
<dbReference type="InterPro" id="IPR034026">
    <property type="entry name" value="EssA"/>
</dbReference>
<dbReference type="InterPro" id="IPR018920">
    <property type="entry name" value="EssA/YueC"/>
</dbReference>
<dbReference type="NCBIfam" id="TIGR03927">
    <property type="entry name" value="T7SS_EssA_Firm"/>
    <property type="match status" value="1"/>
</dbReference>
<dbReference type="Pfam" id="PF10661">
    <property type="entry name" value="EssA"/>
    <property type="match status" value="1"/>
</dbReference>
<name>ESSA_STAAN</name>
<feature type="chain" id="PRO_0000019571" description="ESAT-6 secretion machinery protein EssA">
    <location>
        <begin position="1"/>
        <end position="152"/>
    </location>
</feature>
<feature type="topological domain" description="Cytoplasmic" evidence="1">
    <location>
        <begin position="1"/>
        <end position="114"/>
    </location>
</feature>
<feature type="transmembrane region" description="Helical" evidence="2">
    <location>
        <begin position="115"/>
        <end position="135"/>
    </location>
</feature>
<feature type="topological domain" description="Extracellular" evidence="1">
    <location>
        <begin position="136"/>
        <end position="152"/>
    </location>
</feature>
<organism>
    <name type="scientific">Staphylococcus aureus (strain N315)</name>
    <dbReference type="NCBI Taxonomy" id="158879"/>
    <lineage>
        <taxon>Bacteria</taxon>
        <taxon>Bacillati</taxon>
        <taxon>Bacillota</taxon>
        <taxon>Bacilli</taxon>
        <taxon>Bacillales</taxon>
        <taxon>Staphylococcaceae</taxon>
        <taxon>Staphylococcus</taxon>
    </lineage>
</organism>
<proteinExistence type="inferred from homology"/>
<reference key="1">
    <citation type="journal article" date="2001" name="Lancet">
        <title>Whole genome sequencing of meticillin-resistant Staphylococcus aureus.</title>
        <authorList>
            <person name="Kuroda M."/>
            <person name="Ohta T."/>
            <person name="Uchiyama I."/>
            <person name="Baba T."/>
            <person name="Yuzawa H."/>
            <person name="Kobayashi I."/>
            <person name="Cui L."/>
            <person name="Oguchi A."/>
            <person name="Aoki K."/>
            <person name="Nagai Y."/>
            <person name="Lian J.-Q."/>
            <person name="Ito T."/>
            <person name="Kanamori M."/>
            <person name="Matsumaru H."/>
            <person name="Maruyama A."/>
            <person name="Murakami H."/>
            <person name="Hosoyama A."/>
            <person name="Mizutani-Ui Y."/>
            <person name="Takahashi N.K."/>
            <person name="Sawano T."/>
            <person name="Inoue R."/>
            <person name="Kaito C."/>
            <person name="Sekimizu K."/>
            <person name="Hirakawa H."/>
            <person name="Kuhara S."/>
            <person name="Goto S."/>
            <person name="Yabuzaki J."/>
            <person name="Kanehisa M."/>
            <person name="Yamashita A."/>
            <person name="Oshima K."/>
            <person name="Furuya K."/>
            <person name="Yoshino C."/>
            <person name="Shiba T."/>
            <person name="Hattori M."/>
            <person name="Ogasawara N."/>
            <person name="Hayashi H."/>
            <person name="Hiramatsu K."/>
        </authorList>
    </citation>
    <scope>NUCLEOTIDE SEQUENCE [LARGE SCALE GENOMIC DNA]</scope>
    <source>
        <strain>N315</strain>
    </source>
</reference>
<evidence type="ECO:0000250" key="1">
    <source>
        <dbReference type="UniProtKB" id="P0C052"/>
    </source>
</evidence>
<evidence type="ECO:0000255" key="2"/>
<evidence type="ECO:0000305" key="3"/>
<accession>Q7A7S2</accession>
<keyword id="KW-1003">Cell membrane</keyword>
<keyword id="KW-0472">Membrane</keyword>
<keyword id="KW-0812">Transmembrane</keyword>
<keyword id="KW-1133">Transmembrane helix</keyword>
<keyword id="KW-0843">Virulence</keyword>